<gene>
    <name evidence="1" type="primary">tatB</name>
    <name type="ordered locus">Mkms_4065</name>
</gene>
<dbReference type="EMBL" id="CP000518">
    <property type="protein sequence ID" value="ABL93257.1"/>
    <property type="molecule type" value="Genomic_DNA"/>
</dbReference>
<dbReference type="SMR" id="A1UK99"/>
<dbReference type="STRING" id="189918.Mkms_4065"/>
<dbReference type="KEGG" id="mkm:Mkms_4065"/>
<dbReference type="HOGENOM" id="CLU_086034_2_0_11"/>
<dbReference type="OrthoDB" id="3267321at2"/>
<dbReference type="GO" id="GO:0033281">
    <property type="term" value="C:TAT protein transport complex"/>
    <property type="evidence" value="ECO:0007669"/>
    <property type="project" value="UniProtKB-UniRule"/>
</dbReference>
<dbReference type="GO" id="GO:0008320">
    <property type="term" value="F:protein transmembrane transporter activity"/>
    <property type="evidence" value="ECO:0007669"/>
    <property type="project" value="UniProtKB-UniRule"/>
</dbReference>
<dbReference type="GO" id="GO:0043953">
    <property type="term" value="P:protein transport by the Tat complex"/>
    <property type="evidence" value="ECO:0007669"/>
    <property type="project" value="UniProtKB-UniRule"/>
</dbReference>
<dbReference type="Gene3D" id="1.20.5.3310">
    <property type="match status" value="1"/>
</dbReference>
<dbReference type="HAMAP" id="MF_00237">
    <property type="entry name" value="TatB"/>
    <property type="match status" value="1"/>
</dbReference>
<dbReference type="InterPro" id="IPR018448">
    <property type="entry name" value="TatB"/>
</dbReference>
<dbReference type="NCBIfam" id="TIGR01410">
    <property type="entry name" value="tatB"/>
    <property type="match status" value="1"/>
</dbReference>
<dbReference type="PRINTS" id="PR01506">
    <property type="entry name" value="TATBPROTEIN"/>
</dbReference>
<reference key="1">
    <citation type="submission" date="2006-12" db="EMBL/GenBank/DDBJ databases">
        <title>Complete sequence of chromosome of Mycobacterium sp. KMS.</title>
        <authorList>
            <consortium name="US DOE Joint Genome Institute"/>
            <person name="Copeland A."/>
            <person name="Lucas S."/>
            <person name="Lapidus A."/>
            <person name="Barry K."/>
            <person name="Detter J.C."/>
            <person name="Glavina del Rio T."/>
            <person name="Hammon N."/>
            <person name="Israni S."/>
            <person name="Dalin E."/>
            <person name="Tice H."/>
            <person name="Pitluck S."/>
            <person name="Kiss H."/>
            <person name="Brettin T."/>
            <person name="Bruce D."/>
            <person name="Han C."/>
            <person name="Tapia R."/>
            <person name="Gilna P."/>
            <person name="Schmutz J."/>
            <person name="Larimer F."/>
            <person name="Land M."/>
            <person name="Hauser L."/>
            <person name="Kyrpides N."/>
            <person name="Mikhailova N."/>
            <person name="Miller C.D."/>
            <person name="Richardson P."/>
        </authorList>
    </citation>
    <scope>NUCLEOTIDE SEQUENCE [LARGE SCALE GENOMIC DNA]</scope>
    <source>
        <strain>KMS</strain>
    </source>
</reference>
<name>TATB_MYCSK</name>
<keyword id="KW-1003">Cell membrane</keyword>
<keyword id="KW-0472">Membrane</keyword>
<keyword id="KW-0653">Protein transport</keyword>
<keyword id="KW-0811">Translocation</keyword>
<keyword id="KW-0812">Transmembrane</keyword>
<keyword id="KW-1133">Transmembrane helix</keyword>
<keyword id="KW-0813">Transport</keyword>
<comment type="function">
    <text evidence="1">Part of the twin-arginine translocation (Tat) system that transports large folded proteins containing a characteristic twin-arginine motif in their signal peptide across membranes. Together with TatC, TatB is part of a receptor directly interacting with Tat signal peptides. TatB may form an oligomeric binding site that transiently accommodates folded Tat precursor proteins before their translocation.</text>
</comment>
<comment type="subunit">
    <text evidence="1">The Tat system comprises two distinct complexes: a TatABC complex, containing multiple copies of TatA, TatB and TatC subunits, and a separate TatA complex, containing only TatA subunits. Substrates initially bind to the TatABC complex, which probably triggers association of the separate TatA complex to form the active translocon.</text>
</comment>
<comment type="subcellular location">
    <subcellularLocation>
        <location evidence="1">Cell membrane</location>
        <topology evidence="1">Single-pass membrane protein</topology>
    </subcellularLocation>
</comment>
<comment type="similarity">
    <text evidence="1">Belongs to the TatB family.</text>
</comment>
<organism>
    <name type="scientific">Mycobacterium sp. (strain KMS)</name>
    <dbReference type="NCBI Taxonomy" id="189918"/>
    <lineage>
        <taxon>Bacteria</taxon>
        <taxon>Bacillati</taxon>
        <taxon>Actinomycetota</taxon>
        <taxon>Actinomycetes</taxon>
        <taxon>Mycobacteriales</taxon>
        <taxon>Mycobacteriaceae</taxon>
        <taxon>Mycobacterium</taxon>
    </lineage>
</organism>
<sequence length="137" mass="14880">MFANIGWGEMLILVIAGLVILGPERLPGAIRWTSNALRQARDYVSGATTQLRQDFGPEFEDLREPITELQKLRGMTPRAALTKHLLDGDDSFFTGKFDQQNGKPAAGQEKPVTPVNPPVTATPPSESTATPFDSDAT</sequence>
<protein>
    <recommendedName>
        <fullName evidence="1">Sec-independent protein translocase protein TatB</fullName>
    </recommendedName>
</protein>
<feature type="chain" id="PRO_0000301190" description="Sec-independent protein translocase protein TatB">
    <location>
        <begin position="1"/>
        <end position="137"/>
    </location>
</feature>
<feature type="transmembrane region" description="Helical" evidence="1">
    <location>
        <begin position="2"/>
        <end position="22"/>
    </location>
</feature>
<feature type="region of interest" description="Disordered" evidence="2">
    <location>
        <begin position="92"/>
        <end position="137"/>
    </location>
</feature>
<feature type="compositionally biased region" description="Low complexity" evidence="2">
    <location>
        <begin position="122"/>
        <end position="131"/>
    </location>
</feature>
<evidence type="ECO:0000255" key="1">
    <source>
        <dbReference type="HAMAP-Rule" id="MF_00237"/>
    </source>
</evidence>
<evidence type="ECO:0000256" key="2">
    <source>
        <dbReference type="SAM" id="MobiDB-lite"/>
    </source>
</evidence>
<proteinExistence type="inferred from homology"/>
<accession>A1UK99</accession>